<keyword id="KW-0004">4Fe-4S</keyword>
<keyword id="KW-0963">Cytoplasm</keyword>
<keyword id="KW-0408">Iron</keyword>
<keyword id="KW-0411">Iron-sulfur</keyword>
<keyword id="KW-0479">Metal-binding</keyword>
<keyword id="KW-0949">S-adenosyl-L-methionine</keyword>
<keyword id="KW-0808">Transferase</keyword>
<keyword id="KW-0819">tRNA processing</keyword>
<sequence>MTKKVYVKTFGCQMNEYDSDKMVDVLNAAEGLEKTDTPEDADIILFNTCSVREKAQEKVFSDLGRVRELKEAKPGLLIGVGGCVASQEGASIVSRAPYVDLVFGPQTLHRLPQMIDQRRASGRAQVDISFPEIEKFDHLPPARVEGPSAFVSIMEGCSKYCSYCVVPYTRGDEVSRPLDDVLTEVAGLADQGVREVTLLGQNVNAYRGALTAGSTEIADFATLIEYVADIPGIERIRYTTSHPKEFTQRLIDTYAKVPKLVSHLHLPVQHGSDRILMAMKRGYTVLEYKSVIRKLRAIRPDLSLSTDMIVGFPGETEEDFDKMMALVHEMSYDTSFSFIYSPRPGTPAANLHDDTPREVKLKRLQHLQATIEENVARISRSMVGKVERILVEGPSRKDPNELSGRTENNRVVNFPAPLASHPRLIGQMIDVKINHAYPHSLRGELLLVSDDASAATH</sequence>
<feature type="chain" id="PRO_0000374172" description="tRNA-2-methylthio-N(6)-dimethylallyladenosine synthase">
    <location>
        <begin position="1"/>
        <end position="457"/>
    </location>
</feature>
<feature type="domain" description="MTTase N-terminal" evidence="1">
    <location>
        <begin position="3"/>
        <end position="120"/>
    </location>
</feature>
<feature type="domain" description="Radical SAM core" evidence="2">
    <location>
        <begin position="143"/>
        <end position="377"/>
    </location>
</feature>
<feature type="domain" description="TRAM" evidence="1">
    <location>
        <begin position="380"/>
        <end position="447"/>
    </location>
</feature>
<feature type="binding site" evidence="1">
    <location>
        <position position="12"/>
    </location>
    <ligand>
        <name>[4Fe-4S] cluster</name>
        <dbReference type="ChEBI" id="CHEBI:49883"/>
        <label>1</label>
    </ligand>
</feature>
<feature type="binding site" evidence="1">
    <location>
        <position position="49"/>
    </location>
    <ligand>
        <name>[4Fe-4S] cluster</name>
        <dbReference type="ChEBI" id="CHEBI:49883"/>
        <label>1</label>
    </ligand>
</feature>
<feature type="binding site" evidence="1">
    <location>
        <position position="83"/>
    </location>
    <ligand>
        <name>[4Fe-4S] cluster</name>
        <dbReference type="ChEBI" id="CHEBI:49883"/>
        <label>1</label>
    </ligand>
</feature>
<feature type="binding site" evidence="1">
    <location>
        <position position="157"/>
    </location>
    <ligand>
        <name>[4Fe-4S] cluster</name>
        <dbReference type="ChEBI" id="CHEBI:49883"/>
        <label>2</label>
        <note>4Fe-4S-S-AdoMet</note>
    </ligand>
</feature>
<feature type="binding site" evidence="1">
    <location>
        <position position="161"/>
    </location>
    <ligand>
        <name>[4Fe-4S] cluster</name>
        <dbReference type="ChEBI" id="CHEBI:49883"/>
        <label>2</label>
        <note>4Fe-4S-S-AdoMet</note>
    </ligand>
</feature>
<feature type="binding site" evidence="1">
    <location>
        <position position="164"/>
    </location>
    <ligand>
        <name>[4Fe-4S] cluster</name>
        <dbReference type="ChEBI" id="CHEBI:49883"/>
        <label>2</label>
        <note>4Fe-4S-S-AdoMet</note>
    </ligand>
</feature>
<protein>
    <recommendedName>
        <fullName evidence="1">tRNA-2-methylthio-N(6)-dimethylallyladenosine synthase</fullName>
        <ecNumber evidence="1">2.8.4.3</ecNumber>
    </recommendedName>
    <alternativeName>
        <fullName evidence="1">(Dimethylallyl)adenosine tRNA methylthiotransferase MiaB</fullName>
    </alternativeName>
    <alternativeName>
        <fullName evidence="1">tRNA-i(6)A37 methylthiotransferase</fullName>
    </alternativeName>
</protein>
<organism>
    <name type="scientific">Burkholderia ambifaria (strain ATCC BAA-244 / DSM 16087 / CCUG 44356 / LMG 19182 / AMMD)</name>
    <name type="common">Burkholderia cepacia (strain AMMD)</name>
    <dbReference type="NCBI Taxonomy" id="339670"/>
    <lineage>
        <taxon>Bacteria</taxon>
        <taxon>Pseudomonadati</taxon>
        <taxon>Pseudomonadota</taxon>
        <taxon>Betaproteobacteria</taxon>
        <taxon>Burkholderiales</taxon>
        <taxon>Burkholderiaceae</taxon>
        <taxon>Burkholderia</taxon>
        <taxon>Burkholderia cepacia complex</taxon>
    </lineage>
</organism>
<name>MIAB_BURCM</name>
<comment type="function">
    <text evidence="1">Catalyzes the methylthiolation of N6-(dimethylallyl)adenosine (i(6)A), leading to the formation of 2-methylthio-N6-(dimethylallyl)adenosine (ms(2)i(6)A) at position 37 in tRNAs that read codons beginning with uridine.</text>
</comment>
<comment type="catalytic activity">
    <reaction evidence="1">
        <text>N(6)-dimethylallyladenosine(37) in tRNA + (sulfur carrier)-SH + AH2 + 2 S-adenosyl-L-methionine = 2-methylsulfanyl-N(6)-dimethylallyladenosine(37) in tRNA + (sulfur carrier)-H + 5'-deoxyadenosine + L-methionine + A + S-adenosyl-L-homocysteine + 2 H(+)</text>
        <dbReference type="Rhea" id="RHEA:37067"/>
        <dbReference type="Rhea" id="RHEA-COMP:10375"/>
        <dbReference type="Rhea" id="RHEA-COMP:10376"/>
        <dbReference type="Rhea" id="RHEA-COMP:14737"/>
        <dbReference type="Rhea" id="RHEA-COMP:14739"/>
        <dbReference type="ChEBI" id="CHEBI:13193"/>
        <dbReference type="ChEBI" id="CHEBI:15378"/>
        <dbReference type="ChEBI" id="CHEBI:17319"/>
        <dbReference type="ChEBI" id="CHEBI:17499"/>
        <dbReference type="ChEBI" id="CHEBI:29917"/>
        <dbReference type="ChEBI" id="CHEBI:57844"/>
        <dbReference type="ChEBI" id="CHEBI:57856"/>
        <dbReference type="ChEBI" id="CHEBI:59789"/>
        <dbReference type="ChEBI" id="CHEBI:64428"/>
        <dbReference type="ChEBI" id="CHEBI:74415"/>
        <dbReference type="ChEBI" id="CHEBI:74417"/>
        <dbReference type="EC" id="2.8.4.3"/>
    </reaction>
</comment>
<comment type="cofactor">
    <cofactor evidence="1">
        <name>[4Fe-4S] cluster</name>
        <dbReference type="ChEBI" id="CHEBI:49883"/>
    </cofactor>
    <text evidence="1">Binds 2 [4Fe-4S] clusters. One cluster is coordinated with 3 cysteines and an exchangeable S-adenosyl-L-methionine.</text>
</comment>
<comment type="subunit">
    <text evidence="1">Monomer.</text>
</comment>
<comment type="subcellular location">
    <subcellularLocation>
        <location evidence="1">Cytoplasm</location>
    </subcellularLocation>
</comment>
<comment type="similarity">
    <text evidence="1">Belongs to the methylthiotransferase family. MiaB subfamily.</text>
</comment>
<dbReference type="EC" id="2.8.4.3" evidence="1"/>
<dbReference type="EMBL" id="CP000440">
    <property type="protein sequence ID" value="ABI88302.1"/>
    <property type="molecule type" value="Genomic_DNA"/>
</dbReference>
<dbReference type="RefSeq" id="WP_011657871.1">
    <property type="nucleotide sequence ID" value="NZ_CP009798.1"/>
</dbReference>
<dbReference type="SMR" id="Q0BC21"/>
<dbReference type="GeneID" id="93085054"/>
<dbReference type="KEGG" id="bam:Bamb_2746"/>
<dbReference type="PATRIC" id="fig|339670.21.peg.2148"/>
<dbReference type="eggNOG" id="COG0621">
    <property type="taxonomic scope" value="Bacteria"/>
</dbReference>
<dbReference type="Proteomes" id="UP000000662">
    <property type="component" value="Chromosome 1"/>
</dbReference>
<dbReference type="GO" id="GO:0005829">
    <property type="term" value="C:cytosol"/>
    <property type="evidence" value="ECO:0007669"/>
    <property type="project" value="TreeGrafter"/>
</dbReference>
<dbReference type="GO" id="GO:0051539">
    <property type="term" value="F:4 iron, 4 sulfur cluster binding"/>
    <property type="evidence" value="ECO:0007669"/>
    <property type="project" value="UniProtKB-UniRule"/>
</dbReference>
<dbReference type="GO" id="GO:0046872">
    <property type="term" value="F:metal ion binding"/>
    <property type="evidence" value="ECO:0007669"/>
    <property type="project" value="UniProtKB-KW"/>
</dbReference>
<dbReference type="GO" id="GO:0035597">
    <property type="term" value="F:N6-isopentenyladenosine methylthiotransferase activity"/>
    <property type="evidence" value="ECO:0007669"/>
    <property type="project" value="TreeGrafter"/>
</dbReference>
<dbReference type="CDD" id="cd01335">
    <property type="entry name" value="Radical_SAM"/>
    <property type="match status" value="1"/>
</dbReference>
<dbReference type="FunFam" id="3.40.50.12160:FF:000001">
    <property type="entry name" value="tRNA-2-methylthio-N(6)-dimethylallyladenosine synthase"/>
    <property type="match status" value="1"/>
</dbReference>
<dbReference type="FunFam" id="3.80.30.20:FF:000001">
    <property type="entry name" value="tRNA-2-methylthio-N(6)-dimethylallyladenosine synthase 2"/>
    <property type="match status" value="1"/>
</dbReference>
<dbReference type="Gene3D" id="3.40.50.12160">
    <property type="entry name" value="Methylthiotransferase, N-terminal domain"/>
    <property type="match status" value="1"/>
</dbReference>
<dbReference type="Gene3D" id="3.80.30.20">
    <property type="entry name" value="tm_1862 like domain"/>
    <property type="match status" value="1"/>
</dbReference>
<dbReference type="HAMAP" id="MF_01864">
    <property type="entry name" value="tRNA_metthiotr_MiaB"/>
    <property type="match status" value="1"/>
</dbReference>
<dbReference type="InterPro" id="IPR006638">
    <property type="entry name" value="Elp3/MiaA/NifB-like_rSAM"/>
</dbReference>
<dbReference type="InterPro" id="IPR005839">
    <property type="entry name" value="Methylthiotransferase"/>
</dbReference>
<dbReference type="InterPro" id="IPR020612">
    <property type="entry name" value="Methylthiotransferase_CS"/>
</dbReference>
<dbReference type="InterPro" id="IPR013848">
    <property type="entry name" value="Methylthiotransferase_N"/>
</dbReference>
<dbReference type="InterPro" id="IPR038135">
    <property type="entry name" value="Methylthiotransferase_N_sf"/>
</dbReference>
<dbReference type="InterPro" id="IPR006463">
    <property type="entry name" value="MiaB_methiolase"/>
</dbReference>
<dbReference type="InterPro" id="IPR007197">
    <property type="entry name" value="rSAM"/>
</dbReference>
<dbReference type="InterPro" id="IPR023404">
    <property type="entry name" value="rSAM_horseshoe"/>
</dbReference>
<dbReference type="InterPro" id="IPR002792">
    <property type="entry name" value="TRAM_dom"/>
</dbReference>
<dbReference type="NCBIfam" id="TIGR01574">
    <property type="entry name" value="miaB-methiolase"/>
    <property type="match status" value="1"/>
</dbReference>
<dbReference type="NCBIfam" id="TIGR00089">
    <property type="entry name" value="MiaB/RimO family radical SAM methylthiotransferase"/>
    <property type="match status" value="1"/>
</dbReference>
<dbReference type="PANTHER" id="PTHR43020">
    <property type="entry name" value="CDK5 REGULATORY SUBUNIT-ASSOCIATED PROTEIN 1"/>
    <property type="match status" value="1"/>
</dbReference>
<dbReference type="PANTHER" id="PTHR43020:SF2">
    <property type="entry name" value="MITOCHONDRIAL TRNA METHYLTHIOTRANSFERASE CDK5RAP1"/>
    <property type="match status" value="1"/>
</dbReference>
<dbReference type="Pfam" id="PF04055">
    <property type="entry name" value="Radical_SAM"/>
    <property type="match status" value="1"/>
</dbReference>
<dbReference type="Pfam" id="PF01938">
    <property type="entry name" value="TRAM"/>
    <property type="match status" value="1"/>
</dbReference>
<dbReference type="Pfam" id="PF00919">
    <property type="entry name" value="UPF0004"/>
    <property type="match status" value="1"/>
</dbReference>
<dbReference type="SFLD" id="SFLDF00273">
    <property type="entry name" value="(dimethylallyl)adenosine_tRNA"/>
    <property type="match status" value="1"/>
</dbReference>
<dbReference type="SFLD" id="SFLDG01082">
    <property type="entry name" value="B12-binding_domain_containing"/>
    <property type="match status" value="1"/>
</dbReference>
<dbReference type="SFLD" id="SFLDS00029">
    <property type="entry name" value="Radical_SAM"/>
    <property type="match status" value="1"/>
</dbReference>
<dbReference type="SMART" id="SM00729">
    <property type="entry name" value="Elp3"/>
    <property type="match status" value="1"/>
</dbReference>
<dbReference type="SUPFAM" id="SSF102114">
    <property type="entry name" value="Radical SAM enzymes"/>
    <property type="match status" value="1"/>
</dbReference>
<dbReference type="PROSITE" id="PS51449">
    <property type="entry name" value="MTTASE_N"/>
    <property type="match status" value="1"/>
</dbReference>
<dbReference type="PROSITE" id="PS01278">
    <property type="entry name" value="MTTASE_RADICAL"/>
    <property type="match status" value="1"/>
</dbReference>
<dbReference type="PROSITE" id="PS51918">
    <property type="entry name" value="RADICAL_SAM"/>
    <property type="match status" value="1"/>
</dbReference>
<dbReference type="PROSITE" id="PS50926">
    <property type="entry name" value="TRAM"/>
    <property type="match status" value="1"/>
</dbReference>
<reference key="1">
    <citation type="submission" date="2006-08" db="EMBL/GenBank/DDBJ databases">
        <title>Complete sequence of chromosome 1 of Burkholderia cepacia AMMD.</title>
        <authorList>
            <person name="Copeland A."/>
            <person name="Lucas S."/>
            <person name="Lapidus A."/>
            <person name="Barry K."/>
            <person name="Detter J.C."/>
            <person name="Glavina del Rio T."/>
            <person name="Hammon N."/>
            <person name="Israni S."/>
            <person name="Pitluck S."/>
            <person name="Bruce D."/>
            <person name="Chain P."/>
            <person name="Malfatti S."/>
            <person name="Shin M."/>
            <person name="Vergez L."/>
            <person name="Schmutz J."/>
            <person name="Larimer F."/>
            <person name="Land M."/>
            <person name="Hauser L."/>
            <person name="Kyrpides N."/>
            <person name="Kim E."/>
            <person name="Parke J."/>
            <person name="Coenye T."/>
            <person name="Konstantinidis K."/>
            <person name="Ramette A."/>
            <person name="Tiedje J."/>
            <person name="Richardson P."/>
        </authorList>
    </citation>
    <scope>NUCLEOTIDE SEQUENCE [LARGE SCALE GENOMIC DNA]</scope>
    <source>
        <strain>ATCC BAA-244 / DSM 16087 / CCUG 44356 / LMG 19182 / AMMD</strain>
    </source>
</reference>
<gene>
    <name evidence="1" type="primary">miaB</name>
    <name type="ordered locus">Bamb_2746</name>
</gene>
<accession>Q0BC21</accession>
<proteinExistence type="inferred from homology"/>
<evidence type="ECO:0000255" key="1">
    <source>
        <dbReference type="HAMAP-Rule" id="MF_01864"/>
    </source>
</evidence>
<evidence type="ECO:0000255" key="2">
    <source>
        <dbReference type="PROSITE-ProRule" id="PRU01266"/>
    </source>
</evidence>